<name>WHI5_SCHPO</name>
<feature type="chain" id="PRO_0000300504" description="Cell cycle transcriptional repressor whi5">
    <location>
        <begin position="1"/>
        <end position="252"/>
    </location>
</feature>
<feature type="region of interest" description="Disordered" evidence="1">
    <location>
        <begin position="1"/>
        <end position="23"/>
    </location>
</feature>
<feature type="region of interest" description="Disordered" evidence="1">
    <location>
        <begin position="84"/>
        <end position="110"/>
    </location>
</feature>
<feature type="compositionally biased region" description="Basic and acidic residues" evidence="1">
    <location>
        <begin position="1"/>
        <end position="15"/>
    </location>
</feature>
<comment type="function">
    <text evidence="2">Has a role in meiosis.</text>
</comment>
<comment type="subcellular location">
    <subcellularLocation>
        <location evidence="3">Cytoplasm</location>
    </subcellularLocation>
    <subcellularLocation>
        <location evidence="3">Nucleus</location>
    </subcellularLocation>
</comment>
<comment type="similarity">
    <text evidence="4">Belongs to the WHI5/NRM1 family.</text>
</comment>
<organism>
    <name type="scientific">Schizosaccharomyces pombe (strain 972 / ATCC 24843)</name>
    <name type="common">Fission yeast</name>
    <dbReference type="NCBI Taxonomy" id="284812"/>
    <lineage>
        <taxon>Eukaryota</taxon>
        <taxon>Fungi</taxon>
        <taxon>Dikarya</taxon>
        <taxon>Ascomycota</taxon>
        <taxon>Taphrinomycotina</taxon>
        <taxon>Schizosaccharomycetes</taxon>
        <taxon>Schizosaccharomycetales</taxon>
        <taxon>Schizosaccharomycetaceae</taxon>
        <taxon>Schizosaccharomyces</taxon>
    </lineage>
</organism>
<keyword id="KW-0963">Cytoplasm</keyword>
<keyword id="KW-0469">Meiosis</keyword>
<keyword id="KW-0539">Nucleus</keyword>
<keyword id="KW-1185">Reference proteome</keyword>
<keyword id="KW-0678">Repressor</keyword>
<keyword id="KW-0804">Transcription</keyword>
<keyword id="KW-0805">Transcription regulation</keyword>
<evidence type="ECO:0000256" key="1">
    <source>
        <dbReference type="SAM" id="MobiDB-lite"/>
    </source>
</evidence>
<evidence type="ECO:0000269" key="2">
    <source>
    </source>
</evidence>
<evidence type="ECO:0000269" key="3">
    <source>
    </source>
</evidence>
<evidence type="ECO:0000305" key="4"/>
<dbReference type="EMBL" id="CU329671">
    <property type="protein sequence ID" value="CAC01517.1"/>
    <property type="molecule type" value="Genomic_DNA"/>
</dbReference>
<dbReference type="RefSeq" id="NP_595103.1">
    <property type="nucleotide sequence ID" value="NM_001021010.1"/>
</dbReference>
<dbReference type="SMR" id="Q9HGL9"/>
<dbReference type="BioGRID" id="277434">
    <property type="interactions" value="64"/>
</dbReference>
<dbReference type="STRING" id="284812.Q9HGL9"/>
<dbReference type="iPTMnet" id="Q9HGL9"/>
<dbReference type="PaxDb" id="4896-SPBC800.02.1"/>
<dbReference type="EnsemblFungi" id="SPBC800.02.1">
    <property type="protein sequence ID" value="SPBC800.02.1:pep"/>
    <property type="gene ID" value="SPBC800.02"/>
</dbReference>
<dbReference type="GeneID" id="2540918"/>
<dbReference type="KEGG" id="spo:2540918"/>
<dbReference type="PomBase" id="SPBC800.02">
    <property type="gene designation" value="whi5"/>
</dbReference>
<dbReference type="VEuPathDB" id="FungiDB:SPBC800.02"/>
<dbReference type="HOGENOM" id="CLU_1200409_0_0_1"/>
<dbReference type="InParanoid" id="Q9HGL9"/>
<dbReference type="PRO" id="PR:Q9HGL9"/>
<dbReference type="Proteomes" id="UP000002485">
    <property type="component" value="Chromosome II"/>
</dbReference>
<dbReference type="GO" id="GO:0005737">
    <property type="term" value="C:cytoplasm"/>
    <property type="evidence" value="ECO:0000318"/>
    <property type="project" value="GO_Central"/>
</dbReference>
<dbReference type="GO" id="GO:0005829">
    <property type="term" value="C:cytosol"/>
    <property type="evidence" value="ECO:0007005"/>
    <property type="project" value="PomBase"/>
</dbReference>
<dbReference type="GO" id="GO:0005634">
    <property type="term" value="C:nucleus"/>
    <property type="evidence" value="ECO:0007005"/>
    <property type="project" value="PomBase"/>
</dbReference>
<dbReference type="GO" id="GO:0003712">
    <property type="term" value="F:transcription coregulator activity"/>
    <property type="evidence" value="ECO:0000318"/>
    <property type="project" value="GO_Central"/>
</dbReference>
<dbReference type="GO" id="GO:0003714">
    <property type="term" value="F:transcription corepressor activity"/>
    <property type="evidence" value="ECO:0000266"/>
    <property type="project" value="PomBase"/>
</dbReference>
<dbReference type="GO" id="GO:0000082">
    <property type="term" value="P:G1/S transition of mitotic cell cycle"/>
    <property type="evidence" value="ECO:0007669"/>
    <property type="project" value="InterPro"/>
</dbReference>
<dbReference type="GO" id="GO:0051321">
    <property type="term" value="P:meiotic cell cycle"/>
    <property type="evidence" value="ECO:0007669"/>
    <property type="project" value="UniProtKB-KW"/>
</dbReference>
<dbReference type="GO" id="GO:0000122">
    <property type="term" value="P:negative regulation of transcription by RNA polymerase II"/>
    <property type="evidence" value="ECO:0000305"/>
    <property type="project" value="PomBase"/>
</dbReference>
<dbReference type="InterPro" id="IPR039198">
    <property type="entry name" value="Srl3/Whi5"/>
</dbReference>
<dbReference type="InterPro" id="IPR013734">
    <property type="entry name" value="TF_Nrm1/Whi5"/>
</dbReference>
<dbReference type="PANTHER" id="PTHR28246">
    <property type="entry name" value="G1-SPECIFIC TRANSCRIPTIONAL REPRESSOR WHI5-RELATED"/>
    <property type="match status" value="1"/>
</dbReference>
<dbReference type="PANTHER" id="PTHR28246:SF1">
    <property type="entry name" value="G1-SPECIFIC TRANSCRIPTIONAL REPRESSOR WHI5-RELATED"/>
    <property type="match status" value="1"/>
</dbReference>
<dbReference type="Pfam" id="PF08528">
    <property type="entry name" value="Whi5"/>
    <property type="match status" value="1"/>
</dbReference>
<accession>Q9HGL9</accession>
<reference key="1">
    <citation type="journal article" date="2002" name="Nature">
        <title>The genome sequence of Schizosaccharomyces pombe.</title>
        <authorList>
            <person name="Wood V."/>
            <person name="Gwilliam R."/>
            <person name="Rajandream M.A."/>
            <person name="Lyne M.H."/>
            <person name="Lyne R."/>
            <person name="Stewart A."/>
            <person name="Sgouros J.G."/>
            <person name="Peat N."/>
            <person name="Hayles J."/>
            <person name="Baker S.G."/>
            <person name="Basham D."/>
            <person name="Bowman S."/>
            <person name="Brooks K."/>
            <person name="Brown D."/>
            <person name="Brown S."/>
            <person name="Chillingworth T."/>
            <person name="Churcher C.M."/>
            <person name="Collins M."/>
            <person name="Connor R."/>
            <person name="Cronin A."/>
            <person name="Davis P."/>
            <person name="Feltwell T."/>
            <person name="Fraser A."/>
            <person name="Gentles S."/>
            <person name="Goble A."/>
            <person name="Hamlin N."/>
            <person name="Harris D.E."/>
            <person name="Hidalgo J."/>
            <person name="Hodgson G."/>
            <person name="Holroyd S."/>
            <person name="Hornsby T."/>
            <person name="Howarth S."/>
            <person name="Huckle E.J."/>
            <person name="Hunt S."/>
            <person name="Jagels K."/>
            <person name="James K.D."/>
            <person name="Jones L."/>
            <person name="Jones M."/>
            <person name="Leather S."/>
            <person name="McDonald S."/>
            <person name="McLean J."/>
            <person name="Mooney P."/>
            <person name="Moule S."/>
            <person name="Mungall K.L."/>
            <person name="Murphy L.D."/>
            <person name="Niblett D."/>
            <person name="Odell C."/>
            <person name="Oliver K."/>
            <person name="O'Neil S."/>
            <person name="Pearson D."/>
            <person name="Quail M.A."/>
            <person name="Rabbinowitsch E."/>
            <person name="Rutherford K.M."/>
            <person name="Rutter S."/>
            <person name="Saunders D."/>
            <person name="Seeger K."/>
            <person name="Sharp S."/>
            <person name="Skelton J."/>
            <person name="Simmonds M.N."/>
            <person name="Squares R."/>
            <person name="Squares S."/>
            <person name="Stevens K."/>
            <person name="Taylor K."/>
            <person name="Taylor R.G."/>
            <person name="Tivey A."/>
            <person name="Walsh S.V."/>
            <person name="Warren T."/>
            <person name="Whitehead S."/>
            <person name="Woodward J.R."/>
            <person name="Volckaert G."/>
            <person name="Aert R."/>
            <person name="Robben J."/>
            <person name="Grymonprez B."/>
            <person name="Weltjens I."/>
            <person name="Vanstreels E."/>
            <person name="Rieger M."/>
            <person name="Schaefer M."/>
            <person name="Mueller-Auer S."/>
            <person name="Gabel C."/>
            <person name="Fuchs M."/>
            <person name="Duesterhoeft A."/>
            <person name="Fritzc C."/>
            <person name="Holzer E."/>
            <person name="Moestl D."/>
            <person name="Hilbert H."/>
            <person name="Borzym K."/>
            <person name="Langer I."/>
            <person name="Beck A."/>
            <person name="Lehrach H."/>
            <person name="Reinhardt R."/>
            <person name="Pohl T.M."/>
            <person name="Eger P."/>
            <person name="Zimmermann W."/>
            <person name="Wedler H."/>
            <person name="Wambutt R."/>
            <person name="Purnelle B."/>
            <person name="Goffeau A."/>
            <person name="Cadieu E."/>
            <person name="Dreano S."/>
            <person name="Gloux S."/>
            <person name="Lelaure V."/>
            <person name="Mottier S."/>
            <person name="Galibert F."/>
            <person name="Aves S.J."/>
            <person name="Xiang Z."/>
            <person name="Hunt C."/>
            <person name="Moore K."/>
            <person name="Hurst S.M."/>
            <person name="Lucas M."/>
            <person name="Rochet M."/>
            <person name="Gaillardin C."/>
            <person name="Tallada V.A."/>
            <person name="Garzon A."/>
            <person name="Thode G."/>
            <person name="Daga R.R."/>
            <person name="Cruzado L."/>
            <person name="Jimenez J."/>
            <person name="Sanchez M."/>
            <person name="del Rey F."/>
            <person name="Benito J."/>
            <person name="Dominguez A."/>
            <person name="Revuelta J.L."/>
            <person name="Moreno S."/>
            <person name="Armstrong J."/>
            <person name="Forsburg S.L."/>
            <person name="Cerutti L."/>
            <person name="Lowe T."/>
            <person name="McCombie W.R."/>
            <person name="Paulsen I."/>
            <person name="Potashkin J."/>
            <person name="Shpakovski G.V."/>
            <person name="Ussery D."/>
            <person name="Barrell B.G."/>
            <person name="Nurse P."/>
        </authorList>
    </citation>
    <scope>NUCLEOTIDE SEQUENCE [LARGE SCALE GENOMIC DNA]</scope>
    <source>
        <strain>972 / ATCC 24843</strain>
    </source>
</reference>
<reference key="2">
    <citation type="journal article" date="2005" name="Curr. Biol.">
        <title>A large-scale screen in S. pombe identifies seven novel genes required for critical meiotic events.</title>
        <authorList>
            <person name="Martin-Castellanos C."/>
            <person name="Blanco M."/>
            <person name="Rozalen A.E."/>
            <person name="Perez-Hidalgo L."/>
            <person name="Garcia A.I."/>
            <person name="Conde F."/>
            <person name="Mata J."/>
            <person name="Ellermeier C."/>
            <person name="Davis L."/>
            <person name="San-Segundo P."/>
            <person name="Smith G.R."/>
            <person name="Moreno S."/>
        </authorList>
    </citation>
    <scope>FUNCTION IN MEIOSIS</scope>
</reference>
<reference key="3">
    <citation type="journal article" date="2006" name="Nat. Biotechnol.">
        <title>ORFeome cloning and global analysis of protein localization in the fission yeast Schizosaccharomyces pombe.</title>
        <authorList>
            <person name="Matsuyama A."/>
            <person name="Arai R."/>
            <person name="Yashiroda Y."/>
            <person name="Shirai A."/>
            <person name="Kamata A."/>
            <person name="Sekido S."/>
            <person name="Kobayashi Y."/>
            <person name="Hashimoto A."/>
            <person name="Hamamoto M."/>
            <person name="Hiraoka Y."/>
            <person name="Horinouchi S."/>
            <person name="Yoshida M."/>
        </authorList>
    </citation>
    <scope>SUBCELLULAR LOCATION [LARGE SCALE ANALYSIS]</scope>
</reference>
<gene>
    <name type="primary">whi5</name>
    <name type="synonym">mug54</name>
    <name type="ORF">SPBC800.02</name>
</gene>
<protein>
    <recommendedName>
        <fullName>Cell cycle transcriptional repressor whi5</fullName>
    </recommendedName>
    <alternativeName>
        <fullName>Meiotically up-regulated gene 54 protein</fullName>
    </alternativeName>
</protein>
<proteinExistence type="evidence at protein level"/>
<sequence length="252" mass="28429">MAGGHKKNEATRQTDEVIQQKYDESLSKHKNRCELSLTFEYKLSNKLRARLKAAFFKVDHGWEDQTLDQVETLVRKENHVHRRSRSINDLDSSKLRRPHHPNSIMGSNTGKLRASSFTRLVSPREGFAQLPYKKPVSPYSSSSAVSSTSSSFDRTSPPWLNYVEPHTELPRLPFELSHASTASAKSPLFGMNYHISRPEETDESLRLGTANLSRIRKSTSLPFPTAYPLSADDCKAAEVMLTLVNSMPSKKP</sequence>